<sequence>MGIISHSIVQCGKWQAGPARRQVVFRVHRRCFKMSEALRHLKNGETDLSSLPSGLDSIPRRIHTARGVDDSFSYRHPVLPQVVVLSDAFCVCLAVVACIAWQRIYDTPDELSGALLLANIMAAGAFFLFPKNVPLLDIPDITKVSVQIRYLLPPVAFGEVVFCTVLVMLSWPFGVTVRMGMEWLTFVVAILFVERCVGTYILHTPTMTRRLARKVAIIGSGSEATQMATRINTRMQRMFRLVGTFDDQGGDSDGTVEELVLRAREDHIDAVIICFPPACGQQHVMDVLWRLRGVLADVYVVPSLMTEDCHGWPVERFGPFSLTVLQRRPLSEWDMLEKRAFDLTASVLLLLALAPLLTLVALAIKLDSRGPVLFCQPRQGFNNRYFNVFKFRSMYTDMSDLDAARQTSRTDPRVTRIGRWIRRLSIDELPQLFNVLRGEMSLVGPRPHAPQTRAGGQLLHEAMEEYVARHRVQPGITGWAQINGSRGELVTRDDLCRRVVLDLEYIRAWSIWLDIKIIFLTIKREIFSRNAF</sequence>
<feature type="chain" id="PRO_0000424202" description="Undecaprenyl-phosphate glucose phosphotransferase">
    <location>
        <begin position="1"/>
        <end position="532"/>
    </location>
</feature>
<feature type="transmembrane region" description="Helical" evidence="1">
    <location>
        <begin position="81"/>
        <end position="101"/>
    </location>
</feature>
<feature type="transmembrane region" description="Helical" evidence="1">
    <location>
        <begin position="110"/>
        <end position="130"/>
    </location>
</feature>
<feature type="transmembrane region" description="Helical" evidence="1">
    <location>
        <begin position="155"/>
        <end position="175"/>
    </location>
</feature>
<feature type="transmembrane region" description="Helical" evidence="1">
    <location>
        <begin position="183"/>
        <end position="203"/>
    </location>
</feature>
<feature type="transmembrane region" description="Helical" evidence="1">
    <location>
        <begin position="344"/>
        <end position="364"/>
    </location>
</feature>
<organism>
    <name type="scientific">Komagataeibacter xylinus</name>
    <name type="common">Gluconacetobacter xylinus</name>
    <dbReference type="NCBI Taxonomy" id="28448"/>
    <lineage>
        <taxon>Bacteria</taxon>
        <taxon>Pseudomonadati</taxon>
        <taxon>Pseudomonadota</taxon>
        <taxon>Alphaproteobacteria</taxon>
        <taxon>Acetobacterales</taxon>
        <taxon>Acetobacteraceae</taxon>
        <taxon>Komagataeibacter</taxon>
    </lineage>
</organism>
<accession>Q44576</accession>
<protein>
    <recommendedName>
        <fullName>Undecaprenyl-phosphate glucose phosphotransferase</fullName>
        <ecNumber>2.7.8.31</ecNumber>
    </recommendedName>
</protein>
<comment type="function">
    <text evidence="2">Involved in the biosynthesis of the exopolysaccharide acetan, a water-soluble polysaccharide involved in production of bacterial cellulose (BC).</text>
</comment>
<comment type="catalytic activity">
    <reaction>
        <text>di-trans,octa-cis-undecaprenyl phosphate + UDP-alpha-D-glucose = alpha-D-glucosyl di-trans,octa-cis-undecaprenyl diphosphate + UMP</text>
        <dbReference type="Rhea" id="RHEA:28126"/>
        <dbReference type="ChEBI" id="CHEBI:57865"/>
        <dbReference type="ChEBI" id="CHEBI:58885"/>
        <dbReference type="ChEBI" id="CHEBI:60392"/>
        <dbReference type="ChEBI" id="CHEBI:61254"/>
        <dbReference type="EC" id="2.7.8.31"/>
    </reaction>
</comment>
<comment type="subcellular location">
    <subcellularLocation>
        <location evidence="3">Membrane</location>
        <topology evidence="3">Multi-pass membrane protein</topology>
    </subcellularLocation>
</comment>
<comment type="similarity">
    <text evidence="3">Belongs to the bacterial sugar transferase family.</text>
</comment>
<name>ACEA_KOMXY</name>
<evidence type="ECO:0000255" key="1"/>
<evidence type="ECO:0000269" key="2">
    <source>
    </source>
</evidence>
<evidence type="ECO:0000305" key="3"/>
<dbReference type="EC" id="2.7.8.31"/>
<dbReference type="EMBL" id="X93149">
    <property type="protein sequence ID" value="CAA63648.1"/>
    <property type="molecule type" value="Genomic_DNA"/>
</dbReference>
<dbReference type="PIR" id="T44788">
    <property type="entry name" value="T44788"/>
</dbReference>
<dbReference type="SMR" id="Q44576"/>
<dbReference type="STRING" id="1220579.GCA_001571345_00666"/>
<dbReference type="BioCyc" id="MetaCyc:MONOMER-15987"/>
<dbReference type="GO" id="GO:0016020">
    <property type="term" value="C:membrane"/>
    <property type="evidence" value="ECO:0007669"/>
    <property type="project" value="UniProtKB-SubCell"/>
</dbReference>
<dbReference type="GO" id="GO:0016757">
    <property type="term" value="F:glycosyltransferase activity"/>
    <property type="evidence" value="ECO:0007669"/>
    <property type="project" value="UniProtKB-KW"/>
</dbReference>
<dbReference type="GO" id="GO:0089702">
    <property type="term" value="F:undecaprenyl-phosphate glucose phosphotransferase activity"/>
    <property type="evidence" value="ECO:0007669"/>
    <property type="project" value="UniProtKB-EC"/>
</dbReference>
<dbReference type="GO" id="GO:0000271">
    <property type="term" value="P:polysaccharide biosynthetic process"/>
    <property type="evidence" value="ECO:0007669"/>
    <property type="project" value="UniProtKB-KW"/>
</dbReference>
<dbReference type="InterPro" id="IPR003362">
    <property type="entry name" value="Bact_transf"/>
</dbReference>
<dbReference type="InterPro" id="IPR017475">
    <property type="entry name" value="EPS_sugar_tfrase"/>
</dbReference>
<dbReference type="NCBIfam" id="TIGR03025">
    <property type="entry name" value="EPS_sugtrans"/>
    <property type="match status" value="1"/>
</dbReference>
<dbReference type="PANTHER" id="PTHR30576">
    <property type="entry name" value="COLANIC BIOSYNTHESIS UDP-GLUCOSE LIPID CARRIER TRANSFERASE"/>
    <property type="match status" value="1"/>
</dbReference>
<dbReference type="PANTHER" id="PTHR30576:SF0">
    <property type="entry name" value="UNDECAPRENYL-PHOSPHATE N-ACETYLGALACTOSAMINYL 1-PHOSPHATE TRANSFERASE-RELATED"/>
    <property type="match status" value="1"/>
</dbReference>
<dbReference type="Pfam" id="PF02397">
    <property type="entry name" value="Bac_transf"/>
    <property type="match status" value="1"/>
</dbReference>
<dbReference type="Pfam" id="PF13727">
    <property type="entry name" value="CoA_binding_3"/>
    <property type="match status" value="1"/>
</dbReference>
<reference key="1">
    <citation type="journal article" date="1996" name="FEMS Microbiol. Lett.">
        <title>Identification, cloning and sequencing the aceA gene involved in acetan biosynthesis in Acetobacter xylinum.</title>
        <authorList>
            <person name="Griffin A.M."/>
            <person name="Morris V.J."/>
            <person name="Gasson M.J."/>
        </authorList>
    </citation>
    <scope>NUCLEOTIDE SEQUENCE [GENOMIC DNA]</scope>
    <source>
        <strain>C1</strain>
    </source>
</reference>
<reference key="2">
    <citation type="journal article" date="2002" name="Biosci. Biotechnol. Biochem.">
        <title>Effects of acetan on production of bacterial cellulose by Acetobacter xylinum.</title>
        <authorList>
            <person name="Ishida T."/>
            <person name="Sugano Y."/>
            <person name="Nakai T."/>
            <person name="Shoda M."/>
        </authorList>
    </citation>
    <scope>FUNCTION</scope>
</reference>
<gene>
    <name type="primary">aceA</name>
</gene>
<keyword id="KW-0270">Exopolysaccharide synthesis</keyword>
<keyword id="KW-0328">Glycosyltransferase</keyword>
<keyword id="KW-0472">Membrane</keyword>
<keyword id="KW-0808">Transferase</keyword>
<keyword id="KW-0812">Transmembrane</keyword>
<keyword id="KW-1133">Transmembrane helix</keyword>
<proteinExistence type="inferred from homology"/>